<evidence type="ECO:0000250" key="1">
    <source>
        <dbReference type="UniProtKB" id="P13009"/>
    </source>
</evidence>
<evidence type="ECO:0000250" key="2">
    <source>
        <dbReference type="UniProtKB" id="Q99707"/>
    </source>
</evidence>
<evidence type="ECO:0000255" key="3">
    <source>
        <dbReference type="PROSITE-ProRule" id="PRU00333"/>
    </source>
</evidence>
<evidence type="ECO:0000255" key="4">
    <source>
        <dbReference type="PROSITE-ProRule" id="PRU00334"/>
    </source>
</evidence>
<evidence type="ECO:0000255" key="5">
    <source>
        <dbReference type="PROSITE-ProRule" id="PRU00346"/>
    </source>
</evidence>
<evidence type="ECO:0000255" key="6">
    <source>
        <dbReference type="PROSITE-ProRule" id="PRU00666"/>
    </source>
</evidence>
<evidence type="ECO:0000255" key="7">
    <source>
        <dbReference type="PROSITE-ProRule" id="PRU00667"/>
    </source>
</evidence>
<evidence type="ECO:0000269" key="8">
    <source>
    </source>
</evidence>
<evidence type="ECO:0000269" key="9">
    <source>
    </source>
</evidence>
<evidence type="ECO:0000303" key="10">
    <source>
    </source>
</evidence>
<evidence type="ECO:0000305" key="11"/>
<evidence type="ECO:0000305" key="12">
    <source>
    </source>
</evidence>
<evidence type="ECO:0007744" key="13">
    <source>
    </source>
</evidence>
<keyword id="KW-0028">Amino-acid biosynthesis</keyword>
<keyword id="KW-0846">Cobalamin</keyword>
<keyword id="KW-0170">Cobalt</keyword>
<keyword id="KW-0963">Cytoplasm</keyword>
<keyword id="KW-0479">Metal-binding</keyword>
<keyword id="KW-0486">Methionine biosynthesis</keyword>
<keyword id="KW-0489">Methyltransferase</keyword>
<keyword id="KW-0597">Phosphoprotein</keyword>
<keyword id="KW-1185">Reference proteome</keyword>
<keyword id="KW-0677">Repeat</keyword>
<keyword id="KW-0949">S-adenosyl-L-methionine</keyword>
<keyword id="KW-0808">Transferase</keyword>
<keyword id="KW-0862">Zinc</keyword>
<name>METH_RAT</name>
<dbReference type="EC" id="2.1.1.13" evidence="8 9"/>
<dbReference type="EMBL" id="AF034214">
    <property type="protein sequence ID" value="AAD05384.1"/>
    <property type="molecule type" value="mRNA"/>
</dbReference>
<dbReference type="PIR" id="T42376">
    <property type="entry name" value="T42376"/>
</dbReference>
<dbReference type="RefSeq" id="NP_110491.1">
    <property type="nucleotide sequence ID" value="NM_030864.1"/>
</dbReference>
<dbReference type="SMR" id="Q9Z2Q4"/>
<dbReference type="BioGRID" id="249519">
    <property type="interactions" value="1"/>
</dbReference>
<dbReference type="FunCoup" id="Q9Z2Q4">
    <property type="interactions" value="588"/>
</dbReference>
<dbReference type="IntAct" id="Q9Z2Q4">
    <property type="interactions" value="1"/>
</dbReference>
<dbReference type="STRING" id="10116.ENSRNOP00000023973"/>
<dbReference type="CarbonylDB" id="Q9Z2Q4"/>
<dbReference type="iPTMnet" id="Q9Z2Q4"/>
<dbReference type="PhosphoSitePlus" id="Q9Z2Q4"/>
<dbReference type="PaxDb" id="10116-ENSRNOP00000023973"/>
<dbReference type="GeneID" id="81522"/>
<dbReference type="KEGG" id="rno:81522"/>
<dbReference type="UCSC" id="RGD:621283">
    <property type="organism name" value="rat"/>
</dbReference>
<dbReference type="AGR" id="RGD:621283"/>
<dbReference type="CTD" id="4548"/>
<dbReference type="RGD" id="621283">
    <property type="gene designation" value="Mtr"/>
</dbReference>
<dbReference type="eggNOG" id="KOG1579">
    <property type="taxonomic scope" value="Eukaryota"/>
</dbReference>
<dbReference type="InParanoid" id="Q9Z2Q4"/>
<dbReference type="OrthoDB" id="261426at2759"/>
<dbReference type="PhylomeDB" id="Q9Z2Q4"/>
<dbReference type="BRENDA" id="2.1.1.13">
    <property type="organism ID" value="5301"/>
</dbReference>
<dbReference type="Reactome" id="R-RNO-156581">
    <property type="pathway name" value="Methylation"/>
</dbReference>
<dbReference type="Reactome" id="R-RNO-1614635">
    <property type="pathway name" value="Sulfur amino acid metabolism"/>
</dbReference>
<dbReference type="Reactome" id="R-RNO-9013407">
    <property type="pathway name" value="RHOH GTPase cycle"/>
</dbReference>
<dbReference type="Reactome" id="R-RNO-9759218">
    <property type="pathway name" value="Cobalamin (Cbl) metabolism"/>
</dbReference>
<dbReference type="UniPathway" id="UPA00051">
    <property type="reaction ID" value="UER00081"/>
</dbReference>
<dbReference type="PRO" id="PR:Q9Z2Q4"/>
<dbReference type="Proteomes" id="UP000002494">
    <property type="component" value="Unplaced"/>
</dbReference>
<dbReference type="GO" id="GO:0005829">
    <property type="term" value="C:cytosol"/>
    <property type="evidence" value="ECO:0000318"/>
    <property type="project" value="GO_Central"/>
</dbReference>
<dbReference type="GO" id="GO:0016597">
    <property type="term" value="F:amino acid binding"/>
    <property type="evidence" value="ECO:0000314"/>
    <property type="project" value="RGD"/>
</dbReference>
<dbReference type="GO" id="GO:0031419">
    <property type="term" value="F:cobalamin binding"/>
    <property type="evidence" value="ECO:0000304"/>
    <property type="project" value="RGD"/>
</dbReference>
<dbReference type="GO" id="GO:0005542">
    <property type="term" value="F:folic acid binding"/>
    <property type="evidence" value="ECO:0000314"/>
    <property type="project" value="RGD"/>
</dbReference>
<dbReference type="GO" id="GO:0008705">
    <property type="term" value="F:methionine synthase activity"/>
    <property type="evidence" value="ECO:0000314"/>
    <property type="project" value="RGD"/>
</dbReference>
<dbReference type="GO" id="GO:0008168">
    <property type="term" value="F:methyltransferase activity"/>
    <property type="evidence" value="ECO:0000314"/>
    <property type="project" value="RGD"/>
</dbReference>
<dbReference type="GO" id="GO:0008270">
    <property type="term" value="F:zinc ion binding"/>
    <property type="evidence" value="ECO:0007669"/>
    <property type="project" value="InterPro"/>
</dbReference>
<dbReference type="GO" id="GO:0061431">
    <property type="term" value="P:cellular response to methionine"/>
    <property type="evidence" value="ECO:0000270"/>
    <property type="project" value="RGD"/>
</dbReference>
<dbReference type="GO" id="GO:0009235">
    <property type="term" value="P:cobalamin metabolic process"/>
    <property type="evidence" value="ECO:0000266"/>
    <property type="project" value="RGD"/>
</dbReference>
<dbReference type="GO" id="GO:0050667">
    <property type="term" value="P:homocysteine metabolic process"/>
    <property type="evidence" value="ECO:0000314"/>
    <property type="project" value="RGD"/>
</dbReference>
<dbReference type="GO" id="GO:0009086">
    <property type="term" value="P:methionine biosynthetic process"/>
    <property type="evidence" value="ECO:0000318"/>
    <property type="project" value="GO_Central"/>
</dbReference>
<dbReference type="GO" id="GO:0006555">
    <property type="term" value="P:methionine metabolic process"/>
    <property type="evidence" value="ECO:0000315"/>
    <property type="project" value="RGD"/>
</dbReference>
<dbReference type="GO" id="GO:0032259">
    <property type="term" value="P:methylation"/>
    <property type="evidence" value="ECO:0007669"/>
    <property type="project" value="UniProtKB-KW"/>
</dbReference>
<dbReference type="GO" id="GO:0046653">
    <property type="term" value="P:tetrahydrofolate metabolic process"/>
    <property type="evidence" value="ECO:0000314"/>
    <property type="project" value="RGD"/>
</dbReference>
<dbReference type="CDD" id="cd02069">
    <property type="entry name" value="methionine_synthase_B12_BD"/>
    <property type="match status" value="1"/>
</dbReference>
<dbReference type="CDD" id="cd00740">
    <property type="entry name" value="MeTr"/>
    <property type="match status" value="1"/>
</dbReference>
<dbReference type="FunFam" id="1.10.1240.10:FF:000001">
    <property type="entry name" value="Methionine synthase"/>
    <property type="match status" value="1"/>
</dbReference>
<dbReference type="FunFam" id="3.20.20.20:FF:000002">
    <property type="entry name" value="Methionine synthase"/>
    <property type="match status" value="1"/>
</dbReference>
<dbReference type="FunFam" id="3.20.20.330:FF:000001">
    <property type="entry name" value="Methionine synthase"/>
    <property type="match status" value="1"/>
</dbReference>
<dbReference type="FunFam" id="3.40.50.280:FF:000001">
    <property type="entry name" value="Methionine synthase"/>
    <property type="match status" value="1"/>
</dbReference>
<dbReference type="Gene3D" id="3.40.50.280">
    <property type="entry name" value="Cobalamin-binding domain"/>
    <property type="match status" value="1"/>
</dbReference>
<dbReference type="Gene3D" id="1.10.288.10">
    <property type="entry name" value="Cobalamin-dependent Methionine Synthase, domain 2"/>
    <property type="match status" value="1"/>
</dbReference>
<dbReference type="Gene3D" id="3.20.20.20">
    <property type="entry name" value="Dihydropteroate synthase-like"/>
    <property type="match status" value="1"/>
</dbReference>
<dbReference type="Gene3D" id="3.20.20.330">
    <property type="entry name" value="Homocysteine-binding-like domain"/>
    <property type="match status" value="1"/>
</dbReference>
<dbReference type="Gene3D" id="1.10.1240.10">
    <property type="entry name" value="Methionine synthase domain"/>
    <property type="match status" value="1"/>
</dbReference>
<dbReference type="Gene3D" id="3.10.196.10">
    <property type="entry name" value="Vitamin B12-dependent methionine synthase, activation domain"/>
    <property type="match status" value="1"/>
</dbReference>
<dbReference type="InterPro" id="IPR003759">
    <property type="entry name" value="Cbl-bd_cap"/>
</dbReference>
<dbReference type="InterPro" id="IPR006158">
    <property type="entry name" value="Cobalamin-bd"/>
</dbReference>
<dbReference type="InterPro" id="IPR036724">
    <property type="entry name" value="Cobalamin-bd_sf"/>
</dbReference>
<dbReference type="InterPro" id="IPR011005">
    <property type="entry name" value="Dihydropteroate_synth-like_sf"/>
</dbReference>
<dbReference type="InterPro" id="IPR003726">
    <property type="entry name" value="HCY_dom"/>
</dbReference>
<dbReference type="InterPro" id="IPR036589">
    <property type="entry name" value="HCY_dom_sf"/>
</dbReference>
<dbReference type="InterPro" id="IPR050554">
    <property type="entry name" value="Met_Synthase/Corrinoid"/>
</dbReference>
<dbReference type="InterPro" id="IPR033706">
    <property type="entry name" value="Met_synthase_B12-bd"/>
</dbReference>
<dbReference type="InterPro" id="IPR011822">
    <property type="entry name" value="MetH"/>
</dbReference>
<dbReference type="InterPro" id="IPR036594">
    <property type="entry name" value="Meth_synthase_dom"/>
</dbReference>
<dbReference type="InterPro" id="IPR000489">
    <property type="entry name" value="Pterin-binding_dom"/>
</dbReference>
<dbReference type="InterPro" id="IPR004223">
    <property type="entry name" value="VitB12-dep_Met_synth_activ_dom"/>
</dbReference>
<dbReference type="InterPro" id="IPR037010">
    <property type="entry name" value="VitB12-dep_Met_synth_activ_sf"/>
</dbReference>
<dbReference type="NCBIfam" id="TIGR02082">
    <property type="entry name" value="metH"/>
    <property type="match status" value="1"/>
</dbReference>
<dbReference type="NCBIfam" id="NF007024">
    <property type="entry name" value="PRK09490.1"/>
    <property type="match status" value="1"/>
</dbReference>
<dbReference type="PANTHER" id="PTHR45833">
    <property type="entry name" value="METHIONINE SYNTHASE"/>
    <property type="match status" value="1"/>
</dbReference>
<dbReference type="PANTHER" id="PTHR45833:SF1">
    <property type="entry name" value="METHIONINE SYNTHASE"/>
    <property type="match status" value="1"/>
</dbReference>
<dbReference type="Pfam" id="PF02310">
    <property type="entry name" value="B12-binding"/>
    <property type="match status" value="1"/>
</dbReference>
<dbReference type="Pfam" id="PF02607">
    <property type="entry name" value="B12-binding_2"/>
    <property type="match status" value="1"/>
</dbReference>
<dbReference type="Pfam" id="PF02965">
    <property type="entry name" value="Met_synt_B12"/>
    <property type="match status" value="1"/>
</dbReference>
<dbReference type="Pfam" id="PF00809">
    <property type="entry name" value="Pterin_bind"/>
    <property type="match status" value="1"/>
</dbReference>
<dbReference type="Pfam" id="PF02574">
    <property type="entry name" value="S-methyl_trans"/>
    <property type="match status" value="1"/>
</dbReference>
<dbReference type="PIRSF" id="PIRSF000381">
    <property type="entry name" value="MetH"/>
    <property type="match status" value="1"/>
</dbReference>
<dbReference type="SMART" id="SM01018">
    <property type="entry name" value="B12-binding_2"/>
    <property type="match status" value="1"/>
</dbReference>
<dbReference type="SUPFAM" id="SSF52242">
    <property type="entry name" value="Cobalamin (vitamin B12)-binding domain"/>
    <property type="match status" value="1"/>
</dbReference>
<dbReference type="SUPFAM" id="SSF51717">
    <property type="entry name" value="Dihydropteroate synthetase-like"/>
    <property type="match status" value="1"/>
</dbReference>
<dbReference type="SUPFAM" id="SSF82282">
    <property type="entry name" value="Homocysteine S-methyltransferase"/>
    <property type="match status" value="1"/>
</dbReference>
<dbReference type="SUPFAM" id="SSF56507">
    <property type="entry name" value="Methionine synthase activation domain-like"/>
    <property type="match status" value="1"/>
</dbReference>
<dbReference type="SUPFAM" id="SSF47644">
    <property type="entry name" value="Methionine synthase domain"/>
    <property type="match status" value="1"/>
</dbReference>
<dbReference type="PROSITE" id="PS50974">
    <property type="entry name" value="ADOMET_ACTIVATION"/>
    <property type="match status" value="1"/>
</dbReference>
<dbReference type="PROSITE" id="PS51332">
    <property type="entry name" value="B12_BINDING"/>
    <property type="match status" value="1"/>
</dbReference>
<dbReference type="PROSITE" id="PS51337">
    <property type="entry name" value="B12_BINDING_NTER"/>
    <property type="match status" value="1"/>
</dbReference>
<dbReference type="PROSITE" id="PS50970">
    <property type="entry name" value="HCY"/>
    <property type="match status" value="1"/>
</dbReference>
<dbReference type="PROSITE" id="PS50972">
    <property type="entry name" value="PTERIN_BINDING"/>
    <property type="match status" value="1"/>
</dbReference>
<accession>Q9Z2Q4</accession>
<reference key="1">
    <citation type="journal article" date="1998" name="Biosci. Biotechnol. Biochem.">
        <title>Cloning, sequencing, and heterologous expression of rat methionine synthase cDNA.</title>
        <authorList>
            <person name="Yamada K."/>
            <person name="Tobimatsu T."/>
            <person name="Toraya T."/>
        </authorList>
    </citation>
    <scope>NUCLEOTIDE SEQUENCE [MRNA]</scope>
    <scope>FUNCTION</scope>
    <scope>CATALYTIC ACTIVITY</scope>
    <source>
        <strain>Wistar</strain>
        <tissue>Liver</tissue>
    </source>
</reference>
<reference key="2">
    <citation type="journal article" date="2012" name="Nat. Commun.">
        <title>Quantitative maps of protein phosphorylation sites across 14 different rat organs and tissues.</title>
        <authorList>
            <person name="Lundby A."/>
            <person name="Secher A."/>
            <person name="Lage K."/>
            <person name="Nordsborg N.B."/>
            <person name="Dmytriyev A."/>
            <person name="Lundby C."/>
            <person name="Olsen J.V."/>
        </authorList>
    </citation>
    <scope>PHOSPHORYLATION [LARGE SCALE ANALYSIS] AT THR-1252</scope>
    <scope>IDENTIFICATION BY MASS SPECTROMETRY [LARGE SCALE ANALYSIS]</scope>
</reference>
<reference key="3">
    <citation type="journal article" date="1997" name="J. Nutr. Sci. Vitaminol.">
        <title>Purification and some properties of cobalamin-dependent methionine synthase from rat liver.</title>
        <authorList>
            <person name="Yamada K."/>
            <person name="Tobimatsu T."/>
            <person name="Kawata T."/>
            <person name="Wada M."/>
            <person name="Maekawa A."/>
            <person name="Toraya T."/>
        </authorList>
    </citation>
    <scope>FUNCTION</scope>
    <scope>CATALYTIC ACTIVITY</scope>
    <scope>BIOPHYSICOCHEMICAL PROPERTIES</scope>
    <scope>SUBUNIT</scope>
</reference>
<protein>
    <recommendedName>
        <fullName evidence="10">Methionine synthase</fullName>
        <shortName>MS</shortName>
        <ecNumber evidence="8 9">2.1.1.13</ecNumber>
    </recommendedName>
    <alternativeName>
        <fullName>5-methyltetrahydrofolate--homocysteine methyltransferase</fullName>
    </alternativeName>
    <alternativeName>
        <fullName>Cobalamin-dependent methionine synthase</fullName>
    </alternativeName>
    <alternativeName>
        <fullName>Vitamin-B12 dependent methionine synthase</fullName>
    </alternativeName>
</protein>
<comment type="function">
    <text evidence="2 8 9">Catalyzes the transfer of a methyl group from methylcob(III)alamin (MeCbl) to homocysteine, yielding enzyme-bound cob(I)alamin and methionine in the cytosol (PubMed:9219091, PubMed:9972236). MeCbl is an active form of cobalamin (vitamin B12) used as a cofactor for methionine biosynthesis (PubMed:9219091, PubMed:9972236). Cob(I)alamin form is regenerated to MeCbl by a transfer of a methyl group from 5-methyltetrahydrofolate (By similarity). The processing of cobalamin in the cytosol occurs in a multiprotein complex composed of at least MMACHC, MMADHC, MTRR (methionine synthase reductase) and MTR which may contribute to shuttle safely and efficiently cobalamin towards MTR in order to produce methionine (By similarity).</text>
</comment>
<comment type="catalytic activity">
    <reaction evidence="8 9">
        <text>(6S)-5-methyl-5,6,7,8-tetrahydrofolate + L-homocysteine = (6S)-5,6,7,8-tetrahydrofolate + L-methionine</text>
        <dbReference type="Rhea" id="RHEA:11172"/>
        <dbReference type="ChEBI" id="CHEBI:18608"/>
        <dbReference type="ChEBI" id="CHEBI:57453"/>
        <dbReference type="ChEBI" id="CHEBI:57844"/>
        <dbReference type="ChEBI" id="CHEBI:58199"/>
        <dbReference type="EC" id="2.1.1.13"/>
    </reaction>
    <physiologicalReaction direction="left-to-right" evidence="12">
        <dbReference type="Rhea" id="RHEA:11173"/>
    </physiologicalReaction>
</comment>
<comment type="cofactor">
    <cofactor evidence="1">
        <name>methylcob(III)alamin</name>
        <dbReference type="ChEBI" id="CHEBI:28115"/>
    </cofactor>
</comment>
<comment type="cofactor">
    <cofactor evidence="1">
        <name>Zn(2+)</name>
        <dbReference type="ChEBI" id="CHEBI:29105"/>
    </cofactor>
    <text evidence="1">Binds 1 zinc ion per subunit.</text>
</comment>
<comment type="biophysicochemical properties">
    <kinetics>
        <KM evidence="8">75 uM for (6S)-5-methyl-5,6,7,8-tetrahydrofolate</KM>
        <KM evidence="8">1.7 uM for L-homocysteine</KM>
    </kinetics>
</comment>
<comment type="pathway">
    <text evidence="12">Amino-acid biosynthesis; L-methionine biosynthesis via de novo pathway; L-methionine from L-homocysteine (MetH route): step 1/1.</text>
</comment>
<comment type="subunit">
    <text evidence="2 8">Monomer (PubMed:9219091). Dimer. Forms a multiprotein complex with MMACHC, MMADHC and MTRR.</text>
</comment>
<comment type="subcellular location">
    <subcellularLocation>
        <location evidence="2">Cytoplasm</location>
    </subcellularLocation>
</comment>
<comment type="domain">
    <text evidence="1">Modular enzyme with four functionally distinct domains. The isolated Hcy-binding domain catalyzes methyl transfer from free methylcobalamin to homocysteine. The Hcy-binding domain in association with the pterin-binding domain catalyzes the methylation of cob(I)alamin by methyltetrahydrofolate and the methylation of homocysteine. The B12-binding domain binds the cofactor. The AdoMet activation domain binds S-adenosyl-L-methionine. Under aerobic conditions cob(I)alamin can be converted to inactive cob(II)alamin. Reductive methylation by S-adenosyl-L-methionine and flavodoxin regenerates methylcobalamin (By similarity).</text>
</comment>
<comment type="similarity">
    <text evidence="11">Belongs to the vitamin-B12 dependent methionine synthase family.</text>
</comment>
<sequence>MKKTLQDEIEAILRKRIMVLDGGMGTMIQRYKLSEENFQGQEFKDHSRPLKGNNDILSITQPDVIYQIHKEYLLAGADIIETNTFSSTSIAQADYGLEHLAYRMNKCSADVARKAAEEITLQTGVKRFVAGSLGPTNKTLSVSPSVERPDYRNITFDELVEAYQEQAKGLLDGGVDILLIETIFDTANAKAALFALQKLFEENYASPRPIFISGTIVDKSGRTLSGQTGEAFVTSVSHSDPLCIGLNCALGAAEMRPFIETIGKCTTAYVLCYPNAGLPNTFGDYDETPAMMAMHLKDFAVDGLVNVVGGCCGSTPDHIREIAEAVKNCKPRVPPDSVFEGHMLLSGLEPFRIGPYTNFVNIGERCNVAGSKKFAKLIMAGNYEEALSVAKVQVEMGAQVLDINMDDGMLDGPSAMTKFCNFIASEPDIAKVPLCIDSSNFAVIEAGLKCCQGKCIVNSISLKEGEEDFLEKARKIKKFGAAVVVMAFDEEGQATETDVKVSVCTRAYHLLVEKVGFNPNDIIFDPNILTIGTGMEEHNLYAINFIHATRVIKETLPGVRISGGLSNLSFAFRGMDAIREAMHGVFLYHAIKFGMDMGIVNAGSLPVYDDIHKDLLQLCEDLIWNRDAEATEKLLRYAQTHGKGGKKVIQTDEWRNGSIEERLEYALVKGIEKHIVEDTEEARLNREKYPRPLNIIEGPLMNGMKVVGDLFGAGKMFLPQVIKSARVMKKAVGHLIPFMEKEREEARVLNGSVEEEDPYQGTIVLATVKGDVHDIGKNIVGVVLGCNNFRVIDLGVMTPCDKILQAALDHKADIIGLSGLITPSLDEMIFVAKEMERLAIKIPLLIGGATTSRTHTAVKIAPRYSAPVIHVLDASKSVVVCSQLLDENLKDDYFEEILEEYEDIRQDHYESLKERKYLPLSQARKHSFHIDWLSEPHPVKPTFIGTQVFEDYNLQKLVDYIDWKPFFDVWQLRGKYPNRGFPKIFNDKAVGEEARKVYEDAQNMLSILISRKKLRARGVVGFWPAQSVQDDIHLYAEGAVPQAAEPIATFYGLRQQAEKDSSSTDPYHCLSDFVAPLHSGVRDYLGLFAVACFGVEELSKAYEDDGDDYSSIMVKALGDRLAEAFAEELHERVRRELWAYCGSEQLGVTDLRKLRYEGIRPAPGYPSQPDHTEKLTMWRLANIEQATGIRLTESLAMAPASAVSGLYFSNVKSKYFAVGKISKDQIEDYALRKNMSVAEVEKWLGPILGYDTD</sequence>
<gene>
    <name type="primary">Mtr</name>
</gene>
<organism>
    <name type="scientific">Rattus norvegicus</name>
    <name type="common">Rat</name>
    <dbReference type="NCBI Taxonomy" id="10116"/>
    <lineage>
        <taxon>Eukaryota</taxon>
        <taxon>Metazoa</taxon>
        <taxon>Chordata</taxon>
        <taxon>Craniata</taxon>
        <taxon>Vertebrata</taxon>
        <taxon>Euteleostomi</taxon>
        <taxon>Mammalia</taxon>
        <taxon>Eutheria</taxon>
        <taxon>Euarchontoglires</taxon>
        <taxon>Glires</taxon>
        <taxon>Rodentia</taxon>
        <taxon>Myomorpha</taxon>
        <taxon>Muroidea</taxon>
        <taxon>Muridae</taxon>
        <taxon>Murinae</taxon>
        <taxon>Rattus</taxon>
    </lineage>
</organism>
<proteinExistence type="evidence at protein level"/>
<feature type="chain" id="PRO_0000312902" description="Methionine synthase">
    <location>
        <begin position="1"/>
        <end position="1253"/>
    </location>
</feature>
<feature type="domain" description="Hcy-binding" evidence="3">
    <location>
        <begin position="6"/>
        <end position="326"/>
    </location>
</feature>
<feature type="domain" description="Pterin-binding" evidence="4">
    <location>
        <begin position="359"/>
        <end position="620"/>
    </location>
</feature>
<feature type="domain" description="B12-binding N-terminal" evidence="7">
    <location>
        <begin position="650"/>
        <end position="747"/>
    </location>
</feature>
<feature type="domain" description="B12-binding" evidence="6">
    <location>
        <begin position="760"/>
        <end position="895"/>
    </location>
</feature>
<feature type="domain" description="AdoMet activation" evidence="5">
    <location>
        <begin position="911"/>
        <end position="1253"/>
    </location>
</feature>
<feature type="binding site" evidence="3">
    <location>
        <position position="248"/>
    </location>
    <ligand>
        <name>Zn(2+)</name>
        <dbReference type="ChEBI" id="CHEBI:29105"/>
    </ligand>
</feature>
<feature type="binding site" evidence="3">
    <location>
        <position position="311"/>
    </location>
    <ligand>
        <name>Zn(2+)</name>
        <dbReference type="ChEBI" id="CHEBI:29105"/>
    </ligand>
</feature>
<feature type="binding site" evidence="3">
    <location>
        <position position="312"/>
    </location>
    <ligand>
        <name>Zn(2+)</name>
        <dbReference type="ChEBI" id="CHEBI:29105"/>
    </ligand>
</feature>
<feature type="binding site" evidence="2">
    <location>
        <begin position="370"/>
        <end position="372"/>
    </location>
    <ligand>
        <name>(6S)-5,6,7,8-tetrahydrofolate</name>
        <dbReference type="ChEBI" id="CHEBI:57453"/>
    </ligand>
</feature>
<feature type="binding site" evidence="2">
    <location>
        <position position="437"/>
    </location>
    <ligand>
        <name>(6S)-5,6,7,8-tetrahydrofolate</name>
        <dbReference type="ChEBI" id="CHEBI:57453"/>
    </ligand>
</feature>
<feature type="binding site" evidence="2">
    <location>
        <position position="458"/>
    </location>
    <ligand>
        <name>(6S)-5,6,7,8-tetrahydrofolate</name>
        <dbReference type="ChEBI" id="CHEBI:57453"/>
    </ligand>
</feature>
<feature type="binding site" evidence="2">
    <location>
        <position position="525"/>
    </location>
    <ligand>
        <name>(6S)-5,6,7,8-tetrahydrofolate</name>
        <dbReference type="ChEBI" id="CHEBI:57453"/>
    </ligand>
</feature>
<feature type="binding site" evidence="2">
    <location>
        <position position="567"/>
    </location>
    <ligand>
        <name>(6S)-5,6,7,8-tetrahydrofolate</name>
        <dbReference type="ChEBI" id="CHEBI:57453"/>
    </ligand>
</feature>
<feature type="binding site" evidence="2">
    <location>
        <position position="573"/>
    </location>
    <ligand>
        <name>(6S)-5,6,7,8-tetrahydrofolate</name>
        <dbReference type="ChEBI" id="CHEBI:57453"/>
    </ligand>
</feature>
<feature type="binding site" evidence="2">
    <location>
        <position position="579"/>
    </location>
    <ligand>
        <name>(6S)-5,6,7,8-tetrahydrofolate</name>
        <dbReference type="ChEBI" id="CHEBI:57453"/>
    </ligand>
</feature>
<feature type="binding site" evidence="1">
    <location>
        <position position="697"/>
    </location>
    <ligand>
        <name>methylcob(III)alamin</name>
        <dbReference type="ChEBI" id="CHEBI:28115"/>
    </ligand>
</feature>
<feature type="binding site" evidence="1">
    <location>
        <begin position="770"/>
        <end position="774"/>
    </location>
    <ligand>
        <name>methylcob(III)alamin</name>
        <dbReference type="ChEBI" id="CHEBI:28115"/>
    </ligand>
</feature>
<feature type="binding site" description="axial binding residue" evidence="1">
    <location>
        <position position="773"/>
    </location>
    <ligand>
        <name>methylcob(III)alamin</name>
        <dbReference type="ChEBI" id="CHEBI:28115"/>
    </ligand>
    <ligandPart>
        <name>Co</name>
        <dbReference type="ChEBI" id="CHEBI:27638"/>
    </ligandPart>
</feature>
<feature type="binding site" evidence="1">
    <location>
        <position position="818"/>
    </location>
    <ligand>
        <name>methylcob(III)alamin</name>
        <dbReference type="ChEBI" id="CHEBI:28115"/>
    </ligand>
</feature>
<feature type="binding site" evidence="1">
    <location>
        <position position="822"/>
    </location>
    <ligand>
        <name>methylcob(III)alamin</name>
        <dbReference type="ChEBI" id="CHEBI:28115"/>
    </ligand>
</feature>
<feature type="binding site" evidence="1">
    <location>
        <position position="874"/>
    </location>
    <ligand>
        <name>methylcob(III)alamin</name>
        <dbReference type="ChEBI" id="CHEBI:28115"/>
    </ligand>
</feature>
<feature type="binding site" evidence="1">
    <location>
        <position position="962"/>
    </location>
    <ligand>
        <name>S-adenosyl-L-methionine</name>
        <dbReference type="ChEBI" id="CHEBI:59789"/>
    </ligand>
</feature>
<feature type="binding site" evidence="1">
    <location>
        <position position="1160"/>
    </location>
    <ligand>
        <name>S-adenosyl-L-methionine</name>
        <dbReference type="ChEBI" id="CHEBI:59789"/>
    </ligand>
</feature>
<feature type="binding site" evidence="1">
    <location>
        <begin position="1215"/>
        <end position="1216"/>
    </location>
    <ligand>
        <name>S-adenosyl-L-methionine</name>
        <dbReference type="ChEBI" id="CHEBI:59789"/>
    </ligand>
</feature>
<feature type="modified residue" description="Phosphothreonine" evidence="13">
    <location>
        <position position="1252"/>
    </location>
</feature>